<dbReference type="EC" id="6.1.1.3" evidence="1"/>
<dbReference type="EMBL" id="CP000626">
    <property type="protein sequence ID" value="ABQ18430.1"/>
    <property type="molecule type" value="Genomic_DNA"/>
</dbReference>
<dbReference type="EMBL" id="CP001236">
    <property type="protein sequence ID" value="ACP11164.1"/>
    <property type="molecule type" value="Genomic_DNA"/>
</dbReference>
<dbReference type="RefSeq" id="WP_001121783.1">
    <property type="nucleotide sequence ID" value="NZ_JAACZH010000044.1"/>
</dbReference>
<dbReference type="SMR" id="A5EZ18"/>
<dbReference type="KEGG" id="vco:VC0395_0942"/>
<dbReference type="KEGG" id="vcr:VC395_A0324"/>
<dbReference type="PATRIC" id="fig|345073.21.peg.3084"/>
<dbReference type="eggNOG" id="COG0441">
    <property type="taxonomic scope" value="Bacteria"/>
</dbReference>
<dbReference type="HOGENOM" id="CLU_008554_0_1_6"/>
<dbReference type="OrthoDB" id="9802304at2"/>
<dbReference type="Proteomes" id="UP000000249">
    <property type="component" value="Chromosome 1"/>
</dbReference>
<dbReference type="GO" id="GO:0005829">
    <property type="term" value="C:cytosol"/>
    <property type="evidence" value="ECO:0007669"/>
    <property type="project" value="TreeGrafter"/>
</dbReference>
<dbReference type="GO" id="GO:0005524">
    <property type="term" value="F:ATP binding"/>
    <property type="evidence" value="ECO:0007669"/>
    <property type="project" value="UniProtKB-UniRule"/>
</dbReference>
<dbReference type="GO" id="GO:0046872">
    <property type="term" value="F:metal ion binding"/>
    <property type="evidence" value="ECO:0007669"/>
    <property type="project" value="UniProtKB-KW"/>
</dbReference>
<dbReference type="GO" id="GO:0004829">
    <property type="term" value="F:threonine-tRNA ligase activity"/>
    <property type="evidence" value="ECO:0007669"/>
    <property type="project" value="UniProtKB-UniRule"/>
</dbReference>
<dbReference type="GO" id="GO:0000049">
    <property type="term" value="F:tRNA binding"/>
    <property type="evidence" value="ECO:0007669"/>
    <property type="project" value="UniProtKB-KW"/>
</dbReference>
<dbReference type="GO" id="GO:0006435">
    <property type="term" value="P:threonyl-tRNA aminoacylation"/>
    <property type="evidence" value="ECO:0007669"/>
    <property type="project" value="UniProtKB-UniRule"/>
</dbReference>
<dbReference type="CDD" id="cd01667">
    <property type="entry name" value="TGS_ThrRS"/>
    <property type="match status" value="1"/>
</dbReference>
<dbReference type="CDD" id="cd00860">
    <property type="entry name" value="ThrRS_anticodon"/>
    <property type="match status" value="1"/>
</dbReference>
<dbReference type="CDD" id="cd00771">
    <property type="entry name" value="ThrRS_core"/>
    <property type="match status" value="1"/>
</dbReference>
<dbReference type="FunFam" id="3.10.20.30:FF:000005">
    <property type="entry name" value="Threonine--tRNA ligase"/>
    <property type="match status" value="1"/>
</dbReference>
<dbReference type="FunFam" id="3.30.54.20:FF:000002">
    <property type="entry name" value="Threonine--tRNA ligase"/>
    <property type="match status" value="1"/>
</dbReference>
<dbReference type="FunFam" id="3.30.930.10:FF:000002">
    <property type="entry name" value="Threonine--tRNA ligase"/>
    <property type="match status" value="1"/>
</dbReference>
<dbReference type="FunFam" id="3.40.50.800:FF:000001">
    <property type="entry name" value="Threonine--tRNA ligase"/>
    <property type="match status" value="1"/>
</dbReference>
<dbReference type="FunFam" id="3.30.980.10:FF:000005">
    <property type="entry name" value="Threonyl-tRNA synthetase, mitochondrial"/>
    <property type="match status" value="1"/>
</dbReference>
<dbReference type="Gene3D" id="3.10.20.30">
    <property type="match status" value="1"/>
</dbReference>
<dbReference type="Gene3D" id="3.30.54.20">
    <property type="match status" value="1"/>
</dbReference>
<dbReference type="Gene3D" id="3.40.50.800">
    <property type="entry name" value="Anticodon-binding domain"/>
    <property type="match status" value="1"/>
</dbReference>
<dbReference type="Gene3D" id="3.30.930.10">
    <property type="entry name" value="Bira Bifunctional Protein, Domain 2"/>
    <property type="match status" value="1"/>
</dbReference>
<dbReference type="Gene3D" id="3.30.980.10">
    <property type="entry name" value="Threonyl-trna Synthetase, Chain A, domain 2"/>
    <property type="match status" value="1"/>
</dbReference>
<dbReference type="HAMAP" id="MF_00184">
    <property type="entry name" value="Thr_tRNA_synth"/>
    <property type="match status" value="1"/>
</dbReference>
<dbReference type="InterPro" id="IPR002314">
    <property type="entry name" value="aa-tRNA-synt_IIb"/>
</dbReference>
<dbReference type="InterPro" id="IPR006195">
    <property type="entry name" value="aa-tRNA-synth_II"/>
</dbReference>
<dbReference type="InterPro" id="IPR045864">
    <property type="entry name" value="aa-tRNA-synth_II/BPL/LPL"/>
</dbReference>
<dbReference type="InterPro" id="IPR004154">
    <property type="entry name" value="Anticodon-bd"/>
</dbReference>
<dbReference type="InterPro" id="IPR036621">
    <property type="entry name" value="Anticodon-bd_dom_sf"/>
</dbReference>
<dbReference type="InterPro" id="IPR012675">
    <property type="entry name" value="Beta-grasp_dom_sf"/>
</dbReference>
<dbReference type="InterPro" id="IPR004095">
    <property type="entry name" value="TGS"/>
</dbReference>
<dbReference type="InterPro" id="IPR012676">
    <property type="entry name" value="TGS-like"/>
</dbReference>
<dbReference type="InterPro" id="IPR002320">
    <property type="entry name" value="Thr-tRNA-ligase_IIa"/>
</dbReference>
<dbReference type="InterPro" id="IPR018163">
    <property type="entry name" value="Thr/Ala-tRNA-synth_IIc_edit"/>
</dbReference>
<dbReference type="InterPro" id="IPR047246">
    <property type="entry name" value="ThrRS_anticodon"/>
</dbReference>
<dbReference type="InterPro" id="IPR033728">
    <property type="entry name" value="ThrRS_core"/>
</dbReference>
<dbReference type="InterPro" id="IPR012947">
    <property type="entry name" value="tRNA_SAD"/>
</dbReference>
<dbReference type="NCBIfam" id="TIGR00418">
    <property type="entry name" value="thrS"/>
    <property type="match status" value="1"/>
</dbReference>
<dbReference type="PANTHER" id="PTHR11451:SF44">
    <property type="entry name" value="THREONINE--TRNA LIGASE, CHLOROPLASTIC_MITOCHONDRIAL 2"/>
    <property type="match status" value="1"/>
</dbReference>
<dbReference type="PANTHER" id="PTHR11451">
    <property type="entry name" value="THREONINE-TRNA LIGASE"/>
    <property type="match status" value="1"/>
</dbReference>
<dbReference type="Pfam" id="PF03129">
    <property type="entry name" value="HGTP_anticodon"/>
    <property type="match status" value="1"/>
</dbReference>
<dbReference type="Pfam" id="PF02824">
    <property type="entry name" value="TGS"/>
    <property type="match status" value="1"/>
</dbReference>
<dbReference type="Pfam" id="PF00587">
    <property type="entry name" value="tRNA-synt_2b"/>
    <property type="match status" value="1"/>
</dbReference>
<dbReference type="Pfam" id="PF07973">
    <property type="entry name" value="tRNA_SAD"/>
    <property type="match status" value="1"/>
</dbReference>
<dbReference type="PRINTS" id="PR01047">
    <property type="entry name" value="TRNASYNTHTHR"/>
</dbReference>
<dbReference type="SMART" id="SM00863">
    <property type="entry name" value="tRNA_SAD"/>
    <property type="match status" value="1"/>
</dbReference>
<dbReference type="SUPFAM" id="SSF52954">
    <property type="entry name" value="Class II aaRS ABD-related"/>
    <property type="match status" value="1"/>
</dbReference>
<dbReference type="SUPFAM" id="SSF55681">
    <property type="entry name" value="Class II aaRS and biotin synthetases"/>
    <property type="match status" value="1"/>
</dbReference>
<dbReference type="SUPFAM" id="SSF81271">
    <property type="entry name" value="TGS-like"/>
    <property type="match status" value="1"/>
</dbReference>
<dbReference type="SUPFAM" id="SSF55186">
    <property type="entry name" value="ThrRS/AlaRS common domain"/>
    <property type="match status" value="1"/>
</dbReference>
<dbReference type="PROSITE" id="PS50862">
    <property type="entry name" value="AA_TRNA_LIGASE_II"/>
    <property type="match status" value="1"/>
</dbReference>
<dbReference type="PROSITE" id="PS51880">
    <property type="entry name" value="TGS"/>
    <property type="match status" value="1"/>
</dbReference>
<accession>A5EZ18</accession>
<accession>C3M818</accession>
<reference key="1">
    <citation type="submission" date="2007-03" db="EMBL/GenBank/DDBJ databases">
        <authorList>
            <person name="Heidelberg J."/>
        </authorList>
    </citation>
    <scope>NUCLEOTIDE SEQUENCE [LARGE SCALE GENOMIC DNA]</scope>
    <source>
        <strain>ATCC 39541 / Classical Ogawa 395 / O395</strain>
    </source>
</reference>
<reference key="2">
    <citation type="journal article" date="2008" name="PLoS ONE">
        <title>A recalibrated molecular clock and independent origins for the cholera pandemic clones.</title>
        <authorList>
            <person name="Feng L."/>
            <person name="Reeves P.R."/>
            <person name="Lan R."/>
            <person name="Ren Y."/>
            <person name="Gao C."/>
            <person name="Zhou Z."/>
            <person name="Ren Y."/>
            <person name="Cheng J."/>
            <person name="Wang W."/>
            <person name="Wang J."/>
            <person name="Qian W."/>
            <person name="Li D."/>
            <person name="Wang L."/>
        </authorList>
    </citation>
    <scope>NUCLEOTIDE SEQUENCE [LARGE SCALE GENOMIC DNA]</scope>
    <source>
        <strain>ATCC 39541 / Classical Ogawa 395 / O395</strain>
    </source>
</reference>
<name>SYT_VIBC3</name>
<evidence type="ECO:0000255" key="1">
    <source>
        <dbReference type="HAMAP-Rule" id="MF_00184"/>
    </source>
</evidence>
<evidence type="ECO:0000255" key="2">
    <source>
        <dbReference type="PROSITE-ProRule" id="PRU01228"/>
    </source>
</evidence>
<gene>
    <name evidence="1" type="primary">thrS</name>
    <name type="ordered locus">VC0395_0942</name>
    <name type="ordered locus">VC395_A0324</name>
</gene>
<feature type="chain" id="PRO_1000071680" description="Threonine--tRNA ligase">
    <location>
        <begin position="1"/>
        <end position="642"/>
    </location>
</feature>
<feature type="domain" description="TGS" evidence="2">
    <location>
        <begin position="1"/>
        <end position="61"/>
    </location>
</feature>
<feature type="region of interest" description="Catalytic" evidence="1">
    <location>
        <begin position="244"/>
        <end position="535"/>
    </location>
</feature>
<feature type="binding site" evidence="1">
    <location>
        <position position="335"/>
    </location>
    <ligand>
        <name>Zn(2+)</name>
        <dbReference type="ChEBI" id="CHEBI:29105"/>
    </ligand>
</feature>
<feature type="binding site" evidence="1">
    <location>
        <position position="386"/>
    </location>
    <ligand>
        <name>Zn(2+)</name>
        <dbReference type="ChEBI" id="CHEBI:29105"/>
    </ligand>
</feature>
<feature type="binding site" evidence="1">
    <location>
        <position position="512"/>
    </location>
    <ligand>
        <name>Zn(2+)</name>
        <dbReference type="ChEBI" id="CHEBI:29105"/>
    </ligand>
</feature>
<comment type="function">
    <text evidence="1">Catalyzes the attachment of threonine to tRNA(Thr) in a two-step reaction: L-threonine is first activated by ATP to form Thr-AMP and then transferred to the acceptor end of tRNA(Thr). Also edits incorrectly charged L-seryl-tRNA(Thr).</text>
</comment>
<comment type="catalytic activity">
    <reaction evidence="1">
        <text>tRNA(Thr) + L-threonine + ATP = L-threonyl-tRNA(Thr) + AMP + diphosphate + H(+)</text>
        <dbReference type="Rhea" id="RHEA:24624"/>
        <dbReference type="Rhea" id="RHEA-COMP:9670"/>
        <dbReference type="Rhea" id="RHEA-COMP:9704"/>
        <dbReference type="ChEBI" id="CHEBI:15378"/>
        <dbReference type="ChEBI" id="CHEBI:30616"/>
        <dbReference type="ChEBI" id="CHEBI:33019"/>
        <dbReference type="ChEBI" id="CHEBI:57926"/>
        <dbReference type="ChEBI" id="CHEBI:78442"/>
        <dbReference type="ChEBI" id="CHEBI:78534"/>
        <dbReference type="ChEBI" id="CHEBI:456215"/>
        <dbReference type="EC" id="6.1.1.3"/>
    </reaction>
</comment>
<comment type="cofactor">
    <cofactor evidence="1">
        <name>Zn(2+)</name>
        <dbReference type="ChEBI" id="CHEBI:29105"/>
    </cofactor>
    <text evidence="1">Binds 1 zinc ion per subunit.</text>
</comment>
<comment type="subunit">
    <text evidence="1">Homodimer.</text>
</comment>
<comment type="subcellular location">
    <subcellularLocation>
        <location evidence="1">Cytoplasm</location>
    </subcellularLocation>
</comment>
<comment type="similarity">
    <text evidence="1">Belongs to the class-II aminoacyl-tRNA synthetase family.</text>
</comment>
<keyword id="KW-0030">Aminoacyl-tRNA synthetase</keyword>
<keyword id="KW-0067">ATP-binding</keyword>
<keyword id="KW-0963">Cytoplasm</keyword>
<keyword id="KW-0436">Ligase</keyword>
<keyword id="KW-0479">Metal-binding</keyword>
<keyword id="KW-0547">Nucleotide-binding</keyword>
<keyword id="KW-0648">Protein biosynthesis</keyword>
<keyword id="KW-0694">RNA-binding</keyword>
<keyword id="KW-0820">tRNA-binding</keyword>
<keyword id="KW-0862">Zinc</keyword>
<protein>
    <recommendedName>
        <fullName evidence="1">Threonine--tRNA ligase</fullName>
        <ecNumber evidence="1">6.1.1.3</ecNumber>
    </recommendedName>
    <alternativeName>
        <fullName evidence="1">Threonyl-tRNA synthetase</fullName>
        <shortName evidence="1">ThrRS</shortName>
    </alternativeName>
</protein>
<proteinExistence type="inferred from homology"/>
<organism>
    <name type="scientific">Vibrio cholerae serotype O1 (strain ATCC 39541 / Classical Ogawa 395 / O395)</name>
    <dbReference type="NCBI Taxonomy" id="345073"/>
    <lineage>
        <taxon>Bacteria</taxon>
        <taxon>Pseudomonadati</taxon>
        <taxon>Pseudomonadota</taxon>
        <taxon>Gammaproteobacteria</taxon>
        <taxon>Vibrionales</taxon>
        <taxon>Vibrionaceae</taxon>
        <taxon>Vibrio</taxon>
    </lineage>
</organism>
<sequence length="642" mass="73453">MPIITLPDGSQRHFDNPVSTLEVAQSIGPGLAKATIAGRVNGARVDACDLIEHDASLEIITTKDEVDGLEIVRHSCAHLLGHALKQLYPNAKMAIGPTIDSGFYYDIDLEQSLSQEDLEKIEARMVELAKTKYAVVKKKVSWQEARDTFESRGESYKMEILDENVARDDRPGLYHHEEYIDMCRGPHVPHMGFCQNFKLLNIAGAYWRGNSDNKMLQRIYGTAFHDKKALQAHLTRLEEAAKRDHRKIGKQLDLFHMQQEAPGMVFWHHNGWSVFRELEIFIRHKLNEYGYQEVKGPLMMDRVLWERSGHWDKYADAMFTTSSENREYAIKPMNCPGHIQIFNQGLKSYRDLPLRMAEFGSCHRNEPSGSLHGIMRVRGFTQDDAHIFCTEDQIQQEVTSCIKMVYDTYTTFGFQNIVVKLSTRPEKRVGSDEIWDKSEQALIDSLKAMDIPFEIQEGEGAFYGPKIEFTLYDCLDRAWQCGTVQLDFNLPTRLGATYVGESNERLIPVMIHRAILGSLERFIGILIEEYAGFFPTWLAPEQAVVVNITDKQADYAHEVAQKLQKCGIRAKADLRNEKIGFKIREHTLKRVPYMLVCGDQEMEAGEIAVRTRKGKDLGKFKLDDFIAHIQAEIASRKLNLEE</sequence>